<feature type="transit peptide" description="Mitochondrion" evidence="2">
    <location>
        <begin position="1"/>
        <end position="43"/>
    </location>
</feature>
<feature type="chain" id="PRO_0000408731" description="Altered inheritance of mitochondria protein 9, mitochondrial">
    <location>
        <begin position="44"/>
        <end position="627"/>
    </location>
</feature>
<name>AIM9_YEAS1</name>
<sequence length="627" mass="72390">MIRYTVAGHSRRCVVGASKRVGAIKCITVAATKRFISNKPNEVFTKLTNDNDPKRDAFFKYTWGSWLKNDKQEKEKRFTKFSIEGLNRILNDIYIQSNEMAKAPDGKILPPVFNKNLTVSLVNNVVPKNIGKINPNEKVQVTTLSSIHEGKHHRIYKVDTNLNKAFILRIPYPLENENTLSYRIRSEVATMDFADLKLGIKVPKIFCYGVNSLNPVRQPFVLQEFIEGELLMKDWDPLIEDGSSNQKKYDNVIKQVSDFQSKLVSLKLNAFGSIYFNNDLKDGNEKEFVKEDIYDGETNPDLQNRWKIGPSVERCLWRHKSHLDFHKQMKPFLGPWSKKSPMDIIKNTGLLEAENAKTRIAMKEAGSSAELMYPRTLKEQITTYENLAKIAPDLFNVKTKAIPNMQELLSPRLFHPDLDPMNIIVNKEAQEAYLLDFEGACTKPFILQNSPQFIAYDGPKIYDLKEDITDFDKLSEAEKVQYQFMYKRTRNQHQWEKKLNDNNPKLITAVAPPVKLLRSPYIAAVERKTEEEYLLIDESLLQLKEVWDIFAQNDLVNQKKFPLNYSKEDIERHVEDLQKLHEKLISTPFAATQGWIPQDMFDQLLNSGSIVKQENGDYTVKQPEATK</sequence>
<comment type="subcellular location">
    <subcellularLocation>
        <location evidence="1">Mitochondrion</location>
    </subcellularLocation>
</comment>
<comment type="similarity">
    <text evidence="3">Belongs to the AIM9 family.</text>
</comment>
<accession>B3LRJ8</accession>
<organism>
    <name type="scientific">Saccharomyces cerevisiae (strain RM11-1a)</name>
    <name type="common">Baker's yeast</name>
    <dbReference type="NCBI Taxonomy" id="285006"/>
    <lineage>
        <taxon>Eukaryota</taxon>
        <taxon>Fungi</taxon>
        <taxon>Dikarya</taxon>
        <taxon>Ascomycota</taxon>
        <taxon>Saccharomycotina</taxon>
        <taxon>Saccharomycetes</taxon>
        <taxon>Saccharomycetales</taxon>
        <taxon>Saccharomycetaceae</taxon>
        <taxon>Saccharomyces</taxon>
    </lineage>
</organism>
<protein>
    <recommendedName>
        <fullName>Altered inheritance of mitochondria protein 9, mitochondrial</fullName>
    </recommendedName>
    <alternativeName>
        <fullName>Found in mitochondrial proteome protein 29</fullName>
    </alternativeName>
</protein>
<reference key="1">
    <citation type="submission" date="2005-03" db="EMBL/GenBank/DDBJ databases">
        <title>Annotation of the Saccharomyces cerevisiae RM11-1a genome.</title>
        <authorList>
            <consortium name="The Broad Institute Genome Sequencing Platform"/>
            <person name="Birren B.W."/>
            <person name="Lander E.S."/>
            <person name="Galagan J.E."/>
            <person name="Nusbaum C."/>
            <person name="Devon K."/>
            <person name="Cuomo C."/>
            <person name="Jaffe D.B."/>
            <person name="Butler J."/>
            <person name="Alvarez P."/>
            <person name="Gnerre S."/>
            <person name="Grabherr M."/>
            <person name="Kleber M."/>
            <person name="Mauceli E.W."/>
            <person name="Brockman W."/>
            <person name="MacCallum I.A."/>
            <person name="Rounsley S."/>
            <person name="Young S.K."/>
            <person name="LaButti K."/>
            <person name="Pushparaj V."/>
            <person name="DeCaprio D."/>
            <person name="Crawford M."/>
            <person name="Koehrsen M."/>
            <person name="Engels R."/>
            <person name="Montgomery P."/>
            <person name="Pearson M."/>
            <person name="Howarth C."/>
            <person name="Larson L."/>
            <person name="Luoma S."/>
            <person name="White J."/>
            <person name="O'Leary S."/>
            <person name="Kodira C.D."/>
            <person name="Zeng Q."/>
            <person name="Yandava C."/>
            <person name="Alvarado L."/>
            <person name="Pratt S."/>
            <person name="Kruglyak L."/>
        </authorList>
    </citation>
    <scope>NUCLEOTIDE SEQUENCE [LARGE SCALE GENOMIC DNA]</scope>
    <source>
        <strain>RM11-1a</strain>
    </source>
</reference>
<evidence type="ECO:0000250" key="1"/>
<evidence type="ECO:0000255" key="2"/>
<evidence type="ECO:0000305" key="3"/>
<keyword id="KW-0496">Mitochondrion</keyword>
<keyword id="KW-0809">Transit peptide</keyword>
<gene>
    <name type="primary">AIM9</name>
    <name type="synonym">FMP29</name>
    <name type="ORF">SCRG_04557</name>
</gene>
<proteinExistence type="inferred from homology"/>
<dbReference type="EMBL" id="CH408052">
    <property type="protein sequence ID" value="EDV08911.1"/>
    <property type="molecule type" value="Genomic_DNA"/>
</dbReference>
<dbReference type="HOGENOM" id="CLU_019189_0_1_1"/>
<dbReference type="OrthoDB" id="39361at4893"/>
<dbReference type="Proteomes" id="UP000008335">
    <property type="component" value="Unassembled WGS sequence"/>
</dbReference>
<dbReference type="GO" id="GO:0005739">
    <property type="term" value="C:mitochondrion"/>
    <property type="evidence" value="ECO:0007669"/>
    <property type="project" value="UniProtKB-SubCell"/>
</dbReference>
<dbReference type="InterPro" id="IPR011009">
    <property type="entry name" value="Kinase-like_dom_sf"/>
</dbReference>
<dbReference type="InterPro" id="IPR051035">
    <property type="entry name" value="Mito_inheritance_9"/>
</dbReference>
<dbReference type="PANTHER" id="PTHR36091">
    <property type="entry name" value="ALTERED INHERITANCE OF MITOCHONDRIA PROTEIN 9, MITOCHONDRIAL"/>
    <property type="match status" value="1"/>
</dbReference>
<dbReference type="PANTHER" id="PTHR36091:SF1">
    <property type="entry name" value="ALTERED INHERITANCE OF MITOCHONDRIA PROTEIN 9, MITOCHONDRIAL"/>
    <property type="match status" value="1"/>
</dbReference>
<dbReference type="SUPFAM" id="SSF56112">
    <property type="entry name" value="Protein kinase-like (PK-like)"/>
    <property type="match status" value="1"/>
</dbReference>